<keyword id="KW-0028">Amino-acid biosynthesis</keyword>
<keyword id="KW-0963">Cytoplasm</keyword>
<keyword id="KW-0368">Histidine biosynthesis</keyword>
<keyword id="KW-0456">Lyase</keyword>
<protein>
    <recommendedName>
        <fullName evidence="1">Imidazoleglycerol-phosphate dehydratase</fullName>
        <shortName evidence="1">IGPD</shortName>
        <ecNumber evidence="1">4.2.1.19</ecNumber>
    </recommendedName>
</protein>
<sequence>MRAFKVTRDTNETKIHLELNIDGTGKYAIKTGIAFFDHVLSSFAKHGAFDLKLDVLGDLEIDDHHTVEDVGIVLGKAFENMEKKNIKRFGWAIIPMDEAKATVSIDIGGRPYVVGNYTPNTEKIGNFSTENVVHFFESFSNNAKINLHFEVTGENEHHKVEALFKAFGVAMDMATHVDERKGIVSTKGVI</sequence>
<gene>
    <name evidence="1" type="primary">hisB</name>
    <name type="ordered locus">MmarC5_1059</name>
</gene>
<name>HIS7_METM5</name>
<proteinExistence type="inferred from homology"/>
<evidence type="ECO:0000255" key="1">
    <source>
        <dbReference type="HAMAP-Rule" id="MF_00076"/>
    </source>
</evidence>
<organism>
    <name type="scientific">Methanococcus maripaludis (strain C5 / ATCC BAA-1333)</name>
    <dbReference type="NCBI Taxonomy" id="402880"/>
    <lineage>
        <taxon>Archaea</taxon>
        <taxon>Methanobacteriati</taxon>
        <taxon>Methanobacteriota</taxon>
        <taxon>Methanomada group</taxon>
        <taxon>Methanococci</taxon>
        <taxon>Methanococcales</taxon>
        <taxon>Methanococcaceae</taxon>
        <taxon>Methanococcus</taxon>
    </lineage>
</organism>
<dbReference type="EC" id="4.2.1.19" evidence="1"/>
<dbReference type="EMBL" id="CP000609">
    <property type="protein sequence ID" value="ABO35362.1"/>
    <property type="molecule type" value="Genomic_DNA"/>
</dbReference>
<dbReference type="RefSeq" id="WP_011868815.1">
    <property type="nucleotide sequence ID" value="NC_009135.1"/>
</dbReference>
<dbReference type="SMR" id="A4FYS8"/>
<dbReference type="STRING" id="402880.MmarC5_1059"/>
<dbReference type="GeneID" id="4927670"/>
<dbReference type="KEGG" id="mmq:MmarC5_1059"/>
<dbReference type="eggNOG" id="arCOG04398">
    <property type="taxonomic scope" value="Archaea"/>
</dbReference>
<dbReference type="HOGENOM" id="CLU_044308_2_0_2"/>
<dbReference type="OrthoDB" id="103579at2157"/>
<dbReference type="UniPathway" id="UPA00031">
    <property type="reaction ID" value="UER00011"/>
</dbReference>
<dbReference type="Proteomes" id="UP000000253">
    <property type="component" value="Chromosome"/>
</dbReference>
<dbReference type="GO" id="GO:0005737">
    <property type="term" value="C:cytoplasm"/>
    <property type="evidence" value="ECO:0007669"/>
    <property type="project" value="UniProtKB-SubCell"/>
</dbReference>
<dbReference type="GO" id="GO:0004424">
    <property type="term" value="F:imidazoleglycerol-phosphate dehydratase activity"/>
    <property type="evidence" value="ECO:0007669"/>
    <property type="project" value="UniProtKB-UniRule"/>
</dbReference>
<dbReference type="GO" id="GO:0000105">
    <property type="term" value="P:L-histidine biosynthetic process"/>
    <property type="evidence" value="ECO:0007669"/>
    <property type="project" value="UniProtKB-UniRule"/>
</dbReference>
<dbReference type="CDD" id="cd07914">
    <property type="entry name" value="IGPD"/>
    <property type="match status" value="1"/>
</dbReference>
<dbReference type="FunFam" id="3.30.230.40:FF:000001">
    <property type="entry name" value="Imidazoleglycerol-phosphate dehydratase HisB"/>
    <property type="match status" value="1"/>
</dbReference>
<dbReference type="FunFam" id="3.30.230.40:FF:000003">
    <property type="entry name" value="Imidazoleglycerol-phosphate dehydratase HisB"/>
    <property type="match status" value="1"/>
</dbReference>
<dbReference type="Gene3D" id="3.30.230.40">
    <property type="entry name" value="Imidazole glycerol phosphate dehydratase, domain 1"/>
    <property type="match status" value="2"/>
</dbReference>
<dbReference type="HAMAP" id="MF_00076">
    <property type="entry name" value="HisB"/>
    <property type="match status" value="1"/>
</dbReference>
<dbReference type="InterPro" id="IPR038494">
    <property type="entry name" value="IGPD_sf"/>
</dbReference>
<dbReference type="InterPro" id="IPR000807">
    <property type="entry name" value="ImidazoleglycerolP_deHydtase"/>
</dbReference>
<dbReference type="InterPro" id="IPR020565">
    <property type="entry name" value="ImidazoleglycerP_deHydtase_CS"/>
</dbReference>
<dbReference type="InterPro" id="IPR020568">
    <property type="entry name" value="Ribosomal_Su5_D2-typ_SF"/>
</dbReference>
<dbReference type="NCBIfam" id="NF002111">
    <property type="entry name" value="PRK00951.2-1"/>
    <property type="match status" value="1"/>
</dbReference>
<dbReference type="NCBIfam" id="NF002113">
    <property type="entry name" value="PRK00951.2-3"/>
    <property type="match status" value="1"/>
</dbReference>
<dbReference type="NCBIfam" id="NF002114">
    <property type="entry name" value="PRK00951.2-4"/>
    <property type="match status" value="1"/>
</dbReference>
<dbReference type="PANTHER" id="PTHR23133:SF2">
    <property type="entry name" value="IMIDAZOLEGLYCEROL-PHOSPHATE DEHYDRATASE"/>
    <property type="match status" value="1"/>
</dbReference>
<dbReference type="PANTHER" id="PTHR23133">
    <property type="entry name" value="IMIDAZOLEGLYCEROL-PHOSPHATE DEHYDRATASE HIS7"/>
    <property type="match status" value="1"/>
</dbReference>
<dbReference type="Pfam" id="PF00475">
    <property type="entry name" value="IGPD"/>
    <property type="match status" value="1"/>
</dbReference>
<dbReference type="SUPFAM" id="SSF54211">
    <property type="entry name" value="Ribosomal protein S5 domain 2-like"/>
    <property type="match status" value="2"/>
</dbReference>
<dbReference type="PROSITE" id="PS00954">
    <property type="entry name" value="IGP_DEHYDRATASE_1"/>
    <property type="match status" value="1"/>
</dbReference>
<dbReference type="PROSITE" id="PS00955">
    <property type="entry name" value="IGP_DEHYDRATASE_2"/>
    <property type="match status" value="1"/>
</dbReference>
<reference key="1">
    <citation type="submission" date="2007-03" db="EMBL/GenBank/DDBJ databases">
        <title>Complete sequence of chromosome of Methanococcus maripaludis C5.</title>
        <authorList>
            <consortium name="US DOE Joint Genome Institute"/>
            <person name="Copeland A."/>
            <person name="Lucas S."/>
            <person name="Lapidus A."/>
            <person name="Barry K."/>
            <person name="Glavina del Rio T."/>
            <person name="Dalin E."/>
            <person name="Tice H."/>
            <person name="Pitluck S."/>
            <person name="Chertkov O."/>
            <person name="Brettin T."/>
            <person name="Bruce D."/>
            <person name="Han C."/>
            <person name="Detter J.C."/>
            <person name="Schmutz J."/>
            <person name="Larimer F."/>
            <person name="Land M."/>
            <person name="Hauser L."/>
            <person name="Kyrpides N."/>
            <person name="Mikhailova N."/>
            <person name="Sieprawska-Lupa M."/>
            <person name="Whitman W.B."/>
            <person name="Richardson P."/>
        </authorList>
    </citation>
    <scope>NUCLEOTIDE SEQUENCE [LARGE SCALE GENOMIC DNA]</scope>
    <source>
        <strain>C5 / ATCC BAA-1333</strain>
    </source>
</reference>
<comment type="catalytic activity">
    <reaction evidence="1">
        <text>D-erythro-1-(imidazol-4-yl)glycerol 3-phosphate = 3-(imidazol-4-yl)-2-oxopropyl phosphate + H2O</text>
        <dbReference type="Rhea" id="RHEA:11040"/>
        <dbReference type="ChEBI" id="CHEBI:15377"/>
        <dbReference type="ChEBI" id="CHEBI:57766"/>
        <dbReference type="ChEBI" id="CHEBI:58278"/>
        <dbReference type="EC" id="4.2.1.19"/>
    </reaction>
</comment>
<comment type="pathway">
    <text evidence="1">Amino-acid biosynthesis; L-histidine biosynthesis; L-histidine from 5-phospho-alpha-D-ribose 1-diphosphate: step 6/9.</text>
</comment>
<comment type="subcellular location">
    <subcellularLocation>
        <location evidence="1">Cytoplasm</location>
    </subcellularLocation>
</comment>
<comment type="similarity">
    <text evidence="1">Belongs to the imidazoleglycerol-phosphate dehydratase family.</text>
</comment>
<feature type="chain" id="PRO_1000010296" description="Imidazoleglycerol-phosphate dehydratase">
    <location>
        <begin position="1"/>
        <end position="190"/>
    </location>
</feature>
<accession>A4FYS8</accession>